<name>KAB3_OLDAF</name>
<sequence length="158" mass="16643">MAKFTKSLVLCLLLAAFVGAFGAELSEADKANVVNEIAANIQREILKGVKSSETTLTMFLKEMQLKGLPTCGETCFGGTCNTPGCSCSSWPICTRNGLPKRAGVKSSETTLTMFLKEMQLKGLPTCGETCFGGTCNTPGCTCDPWPICTRDGLPSAAA</sequence>
<organism>
    <name type="scientific">Oldenlandia affinis</name>
    <dbReference type="NCBI Taxonomy" id="60225"/>
    <lineage>
        <taxon>Eukaryota</taxon>
        <taxon>Viridiplantae</taxon>
        <taxon>Streptophyta</taxon>
        <taxon>Embryophyta</taxon>
        <taxon>Tracheophyta</taxon>
        <taxon>Spermatophyta</taxon>
        <taxon>Magnoliopsida</taxon>
        <taxon>eudicotyledons</taxon>
        <taxon>Gunneridae</taxon>
        <taxon>Pentapetalae</taxon>
        <taxon>asterids</taxon>
        <taxon>lamiids</taxon>
        <taxon>Gentianales</taxon>
        <taxon>Rubiaceae</taxon>
        <taxon>Rubioideae</taxon>
        <taxon>Spermacoceae</taxon>
        <taxon>Hedyotis-Oldenlandia complex</taxon>
        <taxon>Oldenlandia</taxon>
    </lineage>
</organism>
<proteinExistence type="evidence at protein level"/>
<feature type="signal peptide" evidence="2">
    <location>
        <begin position="1"/>
        <end position="22"/>
    </location>
</feature>
<feature type="propeptide" id="PRO_0000006627" evidence="4">
    <location>
        <begin position="23"/>
        <end position="66"/>
    </location>
</feature>
<feature type="peptide" id="PRO_0000006628" description="Kalata-B6">
    <location>
        <begin position="67"/>
        <end position="96"/>
    </location>
</feature>
<feature type="propeptide" id="PRO_0000006629" evidence="4">
    <location>
        <begin position="97"/>
        <end position="121"/>
    </location>
</feature>
<feature type="peptide" id="PRO_0000006630" description="Kalata-B3">
    <location>
        <begin position="122"/>
        <end position="151"/>
    </location>
</feature>
<feature type="propeptide" id="PRO_0000006631">
    <location>
        <begin position="152"/>
        <end position="158"/>
    </location>
</feature>
<feature type="disulfide bond" evidence="3">
    <location>
        <begin position="71"/>
        <end position="85"/>
    </location>
</feature>
<feature type="disulfide bond" evidence="3">
    <location>
        <begin position="75"/>
        <end position="87"/>
    </location>
</feature>
<feature type="disulfide bond" evidence="3">
    <location>
        <begin position="80"/>
        <end position="93"/>
    </location>
</feature>
<feature type="disulfide bond" evidence="3">
    <location>
        <begin position="126"/>
        <end position="140"/>
    </location>
</feature>
<feature type="disulfide bond" evidence="3">
    <location>
        <begin position="130"/>
        <end position="142"/>
    </location>
</feature>
<feature type="disulfide bond" evidence="3">
    <location>
        <begin position="135"/>
        <end position="148"/>
    </location>
</feature>
<feature type="cross-link" description="Cyclopeptide (Gly-Asn)">
    <location>
        <begin position="67"/>
        <end position="96"/>
    </location>
</feature>
<feature type="cross-link" description="Cyclopeptide (Gly-Asp)">
    <location>
        <begin position="122"/>
        <end position="151"/>
    </location>
</feature>
<feature type="turn" evidence="5">
    <location>
        <begin position="106"/>
        <end position="108"/>
    </location>
</feature>
<feature type="helix" evidence="5">
    <location>
        <begin position="109"/>
        <end position="120"/>
    </location>
</feature>
<comment type="function">
    <text>Probably participates in a plant defense mechanism. Has hemolytic activity.</text>
</comment>
<comment type="domain">
    <text evidence="1">The presence of a 'disulfide through disulfide knot' structurally defines this protein as a knottin.</text>
</comment>
<comment type="PTM">
    <text>Kalata-B3 and kalata-B6 are cyclic peptides.</text>
</comment>
<comment type="mass spectrometry" mass="3029.5" method="Electrospray" evidence="4">
    <molecule>Kalata-B6</molecule>
</comment>
<comment type="mass spectrometry" mass="3082.5" method="Electrospray" evidence="4">
    <molecule>Kalata-B3</molecule>
</comment>
<comment type="similarity">
    <text evidence="3">Belongs to the cyclotide family. Moebius subfamily.</text>
</comment>
<evidence type="ECO:0000250" key="1"/>
<evidence type="ECO:0000255" key="2"/>
<evidence type="ECO:0000255" key="3">
    <source>
        <dbReference type="PROSITE-ProRule" id="PRU00395"/>
    </source>
</evidence>
<evidence type="ECO:0000269" key="4">
    <source>
    </source>
</evidence>
<evidence type="ECO:0007829" key="5">
    <source>
        <dbReference type="PDB" id="1WN8"/>
    </source>
</evidence>
<reference key="1">
    <citation type="journal article" date="2001" name="Proc. Natl. Acad. Sci. U.S.A.">
        <title>Biosynthesis and insecticidal properties of plant cyclotides: the cyclic knotted proteins from Oldenlandia affinis.</title>
        <authorList>
            <person name="Jennings C.V."/>
            <person name="West J."/>
            <person name="Waine C."/>
            <person name="Craik D.J."/>
            <person name="Anderson M.A."/>
        </authorList>
    </citation>
    <scope>NUCLEOTIDE SEQUENCE [MRNA]</scope>
</reference>
<reference key="2">
    <citation type="journal article" date="2007" name="ChemBioChem">
        <title>The cyclotide fingerprint in Oldenlandia affinis: elucidation of chemically modified, linear and novel macrocyclic peptides.</title>
        <authorList>
            <person name="Plan M.R.R."/>
            <person name="Goeransson U."/>
            <person name="Clark R.J."/>
            <person name="Daly N.L."/>
            <person name="Colgrave M.L."/>
            <person name="Craik D.J."/>
        </authorList>
    </citation>
    <scope>PROTEIN SEQUENCE OF 67-96 AND 122-151</scope>
    <scope>MASS SPECTROMETRY</scope>
</reference>
<reference key="3">
    <citation type="journal article" date="2004" name="J. Biol. Chem.">
        <title>Conserved structural and sequence elements implicated in the processing of gene-encoded circular proteins.</title>
        <authorList>
            <person name="Dutton J.L."/>
            <person name="Renda R.F."/>
            <person name="Waine C."/>
            <person name="Clark R.J."/>
            <person name="Daly N.L."/>
            <person name="Jennings C.V."/>
            <person name="Anderson M.A."/>
            <person name="Craik D.J."/>
        </authorList>
    </citation>
    <scope>STRUCTURE BY NMR OF 48-69</scope>
</reference>
<dbReference type="EMBL" id="AF393826">
    <property type="protein sequence ID" value="AAL05478.1"/>
    <property type="molecule type" value="mRNA"/>
</dbReference>
<dbReference type="PDB" id="1WN8">
    <property type="method" value="NMR"/>
    <property type="chains" value="A=103-124"/>
</dbReference>
<dbReference type="PDBsum" id="1WN8"/>
<dbReference type="SMR" id="P58455"/>
<dbReference type="EvolutionaryTrace" id="P58455"/>
<dbReference type="GO" id="GO:0006952">
    <property type="term" value="P:defense response"/>
    <property type="evidence" value="ECO:0007669"/>
    <property type="project" value="UniProtKB-KW"/>
</dbReference>
<dbReference type="GO" id="GO:0031640">
    <property type="term" value="P:killing of cells of another organism"/>
    <property type="evidence" value="ECO:0007669"/>
    <property type="project" value="UniProtKB-KW"/>
</dbReference>
<dbReference type="InterPro" id="IPR005535">
    <property type="entry name" value="Cyclotide"/>
</dbReference>
<dbReference type="InterPro" id="IPR012324">
    <property type="entry name" value="Cyclotide_moebius_CS"/>
</dbReference>
<dbReference type="InterPro" id="IPR036146">
    <property type="entry name" value="Cyclotide_sf"/>
</dbReference>
<dbReference type="Pfam" id="PF03784">
    <property type="entry name" value="Cyclotide"/>
    <property type="match status" value="2"/>
</dbReference>
<dbReference type="SUPFAM" id="SSF57038">
    <property type="entry name" value="Cyclotides"/>
    <property type="match status" value="2"/>
</dbReference>
<dbReference type="PROSITE" id="PS51052">
    <property type="entry name" value="CYCLOTIDE"/>
    <property type="match status" value="2"/>
</dbReference>
<dbReference type="PROSITE" id="PS60009">
    <property type="entry name" value="CYCLOTIDE_MOEBIUS"/>
    <property type="match status" value="2"/>
</dbReference>
<keyword id="KW-0002">3D-structure</keyword>
<keyword id="KW-0204">Cytolysis</keyword>
<keyword id="KW-0903">Direct protein sequencing</keyword>
<keyword id="KW-1015">Disulfide bond</keyword>
<keyword id="KW-0354">Hemolysis</keyword>
<keyword id="KW-0960">Knottin</keyword>
<keyword id="KW-0611">Plant defense</keyword>
<keyword id="KW-0677">Repeat</keyword>
<keyword id="KW-0732">Signal</keyword>
<gene>
    <name type="primary">OAK2</name>
</gene>
<protein>
    <recommendedName>
        <fullName>Kalata-B3/B6</fullName>
    </recommendedName>
    <component>
        <recommendedName>
            <fullName>Kalata-B6</fullName>
        </recommendedName>
    </component>
    <component>
        <recommendedName>
            <fullName>Kalata-B3</fullName>
        </recommendedName>
    </component>
</protein>
<accession>P58455</accession>